<accession>Q99234</accession>
<accession>D6W295</accession>
<reference key="1">
    <citation type="journal article" date="1997" name="Nature">
        <title>The nucleotide sequence of Saccharomyces cerevisiae chromosome XV.</title>
        <authorList>
            <person name="Dujon B."/>
            <person name="Albermann K."/>
            <person name="Aldea M."/>
            <person name="Alexandraki D."/>
            <person name="Ansorge W."/>
            <person name="Arino J."/>
            <person name="Benes V."/>
            <person name="Bohn C."/>
            <person name="Bolotin-Fukuhara M."/>
            <person name="Bordonne R."/>
            <person name="Boyer J."/>
            <person name="Camasses A."/>
            <person name="Casamayor A."/>
            <person name="Casas C."/>
            <person name="Cheret G."/>
            <person name="Cziepluch C."/>
            <person name="Daignan-Fornier B."/>
            <person name="Dang V.-D."/>
            <person name="de Haan M."/>
            <person name="Delius H."/>
            <person name="Durand P."/>
            <person name="Fairhead C."/>
            <person name="Feldmann H."/>
            <person name="Gaillon L."/>
            <person name="Galisson F."/>
            <person name="Gamo F.-J."/>
            <person name="Gancedo C."/>
            <person name="Goffeau A."/>
            <person name="Goulding S.E."/>
            <person name="Grivell L.A."/>
            <person name="Habbig B."/>
            <person name="Hand N.J."/>
            <person name="Hani J."/>
            <person name="Hattenhorst U."/>
            <person name="Hebling U."/>
            <person name="Hernando Y."/>
            <person name="Herrero E."/>
            <person name="Heumann K."/>
            <person name="Hiesel R."/>
            <person name="Hilger F."/>
            <person name="Hofmann B."/>
            <person name="Hollenberg C.P."/>
            <person name="Hughes B."/>
            <person name="Jauniaux J.-C."/>
            <person name="Kalogeropoulos A."/>
            <person name="Katsoulou C."/>
            <person name="Kordes E."/>
            <person name="Lafuente M.J."/>
            <person name="Landt O."/>
            <person name="Louis E.J."/>
            <person name="Maarse A.C."/>
            <person name="Madania A."/>
            <person name="Mannhaupt G."/>
            <person name="Marck C."/>
            <person name="Martin R.P."/>
            <person name="Mewes H.-W."/>
            <person name="Michaux G."/>
            <person name="Paces V."/>
            <person name="Parle-McDermott A.G."/>
            <person name="Pearson B.M."/>
            <person name="Perrin A."/>
            <person name="Pettersson B."/>
            <person name="Poch O."/>
            <person name="Pohl T.M."/>
            <person name="Poirey R."/>
            <person name="Portetelle D."/>
            <person name="Pujol A."/>
            <person name="Purnelle B."/>
            <person name="Ramezani Rad M."/>
            <person name="Rechmann S."/>
            <person name="Schwager C."/>
            <person name="Schweizer M."/>
            <person name="Sor F."/>
            <person name="Sterky F."/>
            <person name="Tarassov I.A."/>
            <person name="Teodoru C."/>
            <person name="Tettelin H."/>
            <person name="Thierry A."/>
            <person name="Tobiasch E."/>
            <person name="Tzermia M."/>
            <person name="Uhlen M."/>
            <person name="Unseld M."/>
            <person name="Valens M."/>
            <person name="Vandenbol M."/>
            <person name="Vetter I."/>
            <person name="Vlcek C."/>
            <person name="Voet M."/>
            <person name="Volckaert G."/>
            <person name="Voss H."/>
            <person name="Wambutt R."/>
            <person name="Wedler H."/>
            <person name="Wiemann S."/>
            <person name="Winsor B."/>
            <person name="Wolfe K.H."/>
            <person name="Zollner A."/>
            <person name="Zumstein E."/>
            <person name="Kleine K."/>
        </authorList>
    </citation>
    <scope>NUCLEOTIDE SEQUENCE [LARGE SCALE GENOMIC DNA]</scope>
    <source>
        <strain>ATCC 204508 / S288c</strain>
    </source>
</reference>
<reference key="2">
    <citation type="journal article" date="2014" name="G3 (Bethesda)">
        <title>The reference genome sequence of Saccharomyces cerevisiae: Then and now.</title>
        <authorList>
            <person name="Engel S.R."/>
            <person name="Dietrich F.S."/>
            <person name="Fisk D.G."/>
            <person name="Binkley G."/>
            <person name="Balakrishnan R."/>
            <person name="Costanzo M.C."/>
            <person name="Dwight S.S."/>
            <person name="Hitz B.C."/>
            <person name="Karra K."/>
            <person name="Nash R.S."/>
            <person name="Weng S."/>
            <person name="Wong E.D."/>
            <person name="Lloyd P."/>
            <person name="Skrzypek M.S."/>
            <person name="Miyasato S.R."/>
            <person name="Simison M."/>
            <person name="Cherry J.M."/>
        </authorList>
    </citation>
    <scope>GENOME REANNOTATION</scope>
    <source>
        <strain>ATCC 204508 / S288c</strain>
    </source>
</reference>
<reference key="3">
    <citation type="journal article" date="1997" name="Genetics">
        <title>Large scale identification of genes involved in cell surface biosynthesis and architecture in Saccharomyces cerevisiae.</title>
        <authorList>
            <person name="Lussier M."/>
            <person name="White A.-M."/>
            <person name="Sheraton J."/>
            <person name="di Paolo T."/>
            <person name="Treadwell J."/>
            <person name="Southard S.B."/>
            <person name="Horenstein C.I."/>
            <person name="Chen-Weiner J."/>
            <person name="Ram A.F.J."/>
            <person name="Kapteyn J.C."/>
            <person name="Roemer T.W."/>
            <person name="Vo D.H."/>
            <person name="Bondoc D.C."/>
            <person name="Hall J."/>
            <person name="Zhong W.-W."/>
            <person name="Sdicu A.-M."/>
            <person name="Davies J."/>
            <person name="Klis F.M."/>
            <person name="Robbins P.W."/>
            <person name="Bussey H."/>
        </authorList>
    </citation>
    <scope>IDENTIFICATION</scope>
</reference>
<reference key="4">
    <citation type="journal article" date="1997" name="Genetics">
        <title>Dissection of filamentous growth by transposon mutagenesis in Saccharomyces cerevisiae.</title>
        <authorList>
            <person name="Moesch H.-U."/>
            <person name="Fink G.R."/>
        </authorList>
    </citation>
    <scope>IDENTIFICATION</scope>
</reference>
<reference key="5">
    <citation type="journal article" date="2000" name="Genetics">
        <title>Zinc-regulated genes in Saccharomyces cerevisiae revealed by transposon tagging.</title>
        <authorList>
            <person name="Yuan D.S."/>
        </authorList>
    </citation>
    <scope>INDUCTION</scope>
</reference>
<reference key="6">
    <citation type="journal article" date="2006" name="Proc. Natl. Acad. Sci. U.S.A.">
        <title>A global topology map of the Saccharomyces cerevisiae membrane proteome.</title>
        <authorList>
            <person name="Kim H."/>
            <person name="Melen K."/>
            <person name="Oesterberg M."/>
            <person name="von Heijne G."/>
        </authorList>
    </citation>
    <scope>TOPOLOGY [LARGE SCALE ANALYSIS]</scope>
    <source>
        <strain>ATCC 208353 / W303-1A</strain>
    </source>
</reference>
<comment type="function">
    <text>Involved in invasion during filamentous growth.</text>
</comment>
<comment type="subcellular location">
    <subcellularLocation>
        <location evidence="4">Membrane</location>
        <topology evidence="4">Multi-pass membrane protein</topology>
    </subcellularLocation>
</comment>
<comment type="induction">
    <text evidence="3">Repressed by zinc.</text>
</comment>
<gene>
    <name type="primary">DFG16</name>
    <name type="synonym">ECM41</name>
    <name type="synonym">ZRG11</name>
    <name type="ordered locus">YOR030W</name>
    <name type="ORF">OR26.20</name>
</gene>
<organism>
    <name type="scientific">Saccharomyces cerevisiae (strain ATCC 204508 / S288c)</name>
    <name type="common">Baker's yeast</name>
    <dbReference type="NCBI Taxonomy" id="559292"/>
    <lineage>
        <taxon>Eukaryota</taxon>
        <taxon>Fungi</taxon>
        <taxon>Dikarya</taxon>
        <taxon>Ascomycota</taxon>
        <taxon>Saccharomycotina</taxon>
        <taxon>Saccharomycetes</taxon>
        <taxon>Saccharomycetales</taxon>
        <taxon>Saccharomycetaceae</taxon>
        <taxon>Saccharomyces</taxon>
    </lineage>
</organism>
<proteinExistence type="evidence at protein level"/>
<evidence type="ECO:0000255" key="1"/>
<evidence type="ECO:0000256" key="2">
    <source>
        <dbReference type="SAM" id="MobiDB-lite"/>
    </source>
</evidence>
<evidence type="ECO:0000269" key="3">
    <source>
    </source>
</evidence>
<evidence type="ECO:0000305" key="4"/>
<sequence length="619" mass="71730">MIIRLHFYYLLTLVYHLGLVGAYEKAARKRIQPPDLIPGPPGHKLGDERPPHYDHRPPYKKHIDNIPAYNLTDLIDDKLLNKYENSCTVNVLTGGFISLASNSWHLRAYNYTLNYPSFLIRCDNGSANPNFSHVLQDFVYDINNKFNVQDDSSKYIGKDPFPLGMIMITFASGCICVATWMLFLVVLLLPSDNHNRRNKVVHVYVLFSAIIRTVFLNETIAVIFDSQYHDDYQDASQFESFIVETAPYKICELVANILSDINWIYIVHYLQSNYGKPTWNWIPFKMKKGTHIIITVGCFLSLADNILFANLLWRKNLVVLKVFYKLIELLIYTIFISIICYFTWHNFAYILLPKTAEINTDGKCKTKLRILWENYHETIPLLAYNILIFILFYFTTIFFAAFTKHVRGWTFNFVHLLKVLITVNVWGLIGVLEKRELHISKKTVLGRKINNRDKFFANPTVNYYGEDLGKHLSAITLNRDLNTTKSNTTSHDSSSLVGSPSPTWKSPIERIRDRRRRHKIMKSENKFGQNPSFGSKSNGKPNTKTTLSKYRQLLRKPRRKTNSYEPKNGIGQNKEGSTVRPGADKHIRDSNYLATDISDNESMETELRTNHIYNYENSD</sequence>
<name>DFG16_YEAST</name>
<dbReference type="EMBL" id="X87331">
    <property type="protein sequence ID" value="CAA60746.1"/>
    <property type="molecule type" value="Genomic_DNA"/>
</dbReference>
<dbReference type="EMBL" id="Z74938">
    <property type="protein sequence ID" value="CAA99220.1"/>
    <property type="molecule type" value="Genomic_DNA"/>
</dbReference>
<dbReference type="EMBL" id="BK006948">
    <property type="protein sequence ID" value="DAA10811.1"/>
    <property type="molecule type" value="Genomic_DNA"/>
</dbReference>
<dbReference type="PIR" id="S54636">
    <property type="entry name" value="S54636"/>
</dbReference>
<dbReference type="RefSeq" id="NP_014673.1">
    <property type="nucleotide sequence ID" value="NM_001183449.1"/>
</dbReference>
<dbReference type="SMR" id="Q99234"/>
<dbReference type="BioGRID" id="34432">
    <property type="interactions" value="266"/>
</dbReference>
<dbReference type="FunCoup" id="Q99234">
    <property type="interactions" value="37"/>
</dbReference>
<dbReference type="STRING" id="4932.YOR030W"/>
<dbReference type="iPTMnet" id="Q99234"/>
<dbReference type="PaxDb" id="4932-YOR030W"/>
<dbReference type="PeptideAtlas" id="Q99234"/>
<dbReference type="EnsemblFungi" id="YOR030W_mRNA">
    <property type="protein sequence ID" value="YOR030W"/>
    <property type="gene ID" value="YOR030W"/>
</dbReference>
<dbReference type="GeneID" id="854195"/>
<dbReference type="KEGG" id="sce:YOR030W"/>
<dbReference type="AGR" id="SGD:S000005556"/>
<dbReference type="SGD" id="S000005556">
    <property type="gene designation" value="DFG16"/>
</dbReference>
<dbReference type="VEuPathDB" id="FungiDB:YOR030W"/>
<dbReference type="eggNOG" id="ENOG502RJKI">
    <property type="taxonomic scope" value="Eukaryota"/>
</dbReference>
<dbReference type="HOGENOM" id="CLU_031414_0_0_1"/>
<dbReference type="InParanoid" id="Q99234"/>
<dbReference type="OMA" id="WNDYHET"/>
<dbReference type="OrthoDB" id="4033945at2759"/>
<dbReference type="BioCyc" id="YEAST:G3O-33576-MONOMER"/>
<dbReference type="BioGRID-ORCS" id="854195">
    <property type="hits" value="1 hit in 10 CRISPR screens"/>
</dbReference>
<dbReference type="PRO" id="PR:Q99234"/>
<dbReference type="Proteomes" id="UP000002311">
    <property type="component" value="Chromosome XV"/>
</dbReference>
<dbReference type="RNAct" id="Q99234">
    <property type="molecule type" value="protein"/>
</dbReference>
<dbReference type="GO" id="GO:0005886">
    <property type="term" value="C:plasma membrane"/>
    <property type="evidence" value="ECO:0000314"/>
    <property type="project" value="SGD"/>
</dbReference>
<dbReference type="GO" id="GO:0071467">
    <property type="term" value="P:cellular response to pH"/>
    <property type="evidence" value="ECO:0000318"/>
    <property type="project" value="GO_Central"/>
</dbReference>
<dbReference type="GO" id="GO:0016485">
    <property type="term" value="P:protein processing"/>
    <property type="evidence" value="ECO:0000315"/>
    <property type="project" value="SGD"/>
</dbReference>
<dbReference type="GO" id="GO:0007124">
    <property type="term" value="P:pseudohyphal growth"/>
    <property type="evidence" value="ECO:0000315"/>
    <property type="project" value="SGD"/>
</dbReference>
<dbReference type="InterPro" id="IPR014844">
    <property type="entry name" value="PalH"/>
</dbReference>
<dbReference type="PANTHER" id="PTHR35779">
    <property type="entry name" value="PH-RESPONSE REGULATOR PROTEIN PALH/RIM21"/>
    <property type="match status" value="1"/>
</dbReference>
<dbReference type="PANTHER" id="PTHR35779:SF2">
    <property type="entry name" value="PROTEIN DFG16"/>
    <property type="match status" value="1"/>
</dbReference>
<dbReference type="Pfam" id="PF08733">
    <property type="entry name" value="PalH"/>
    <property type="match status" value="1"/>
</dbReference>
<protein>
    <recommendedName>
        <fullName>Protein DFG16</fullName>
    </recommendedName>
    <alternativeName>
        <fullName>Extracellular mutant protein 41</fullName>
    </alternativeName>
    <alternativeName>
        <fullName>Zinc-regulated gene 11 protein</fullName>
    </alternativeName>
</protein>
<keyword id="KW-0472">Membrane</keyword>
<keyword id="KW-1185">Reference proteome</keyword>
<keyword id="KW-0812">Transmembrane</keyword>
<keyword id="KW-1133">Transmembrane helix</keyword>
<keyword id="KW-0862">Zinc</keyword>
<feature type="chain" id="PRO_0000079873" description="Protein DFG16">
    <location>
        <begin position="1"/>
        <end position="619"/>
    </location>
</feature>
<feature type="topological domain" description="Extracellular" evidence="1">
    <location>
        <position position="1"/>
    </location>
</feature>
<feature type="transmembrane region" description="Helical" evidence="1">
    <location>
        <begin position="2"/>
        <end position="22"/>
    </location>
</feature>
<feature type="topological domain" description="Cytoplasmic" evidence="1">
    <location>
        <begin position="23"/>
        <end position="167"/>
    </location>
</feature>
<feature type="transmembrane region" description="Helical" evidence="1">
    <location>
        <begin position="168"/>
        <end position="188"/>
    </location>
</feature>
<feature type="topological domain" description="Extracellular" evidence="1">
    <location>
        <begin position="189"/>
        <end position="203"/>
    </location>
</feature>
<feature type="transmembrane region" description="Helical" evidence="1">
    <location>
        <begin position="204"/>
        <end position="224"/>
    </location>
</feature>
<feature type="topological domain" description="Cytoplasmic" evidence="1">
    <location>
        <begin position="225"/>
        <end position="291"/>
    </location>
</feature>
<feature type="transmembrane region" description="Helical" evidence="1">
    <location>
        <begin position="292"/>
        <end position="312"/>
    </location>
</feature>
<feature type="topological domain" description="Extracellular" evidence="1">
    <location>
        <begin position="313"/>
        <end position="321"/>
    </location>
</feature>
<feature type="transmembrane region" description="Helical" evidence="1">
    <location>
        <begin position="322"/>
        <end position="342"/>
    </location>
</feature>
<feature type="topological domain" description="Cytoplasmic" evidence="1">
    <location>
        <begin position="343"/>
        <end position="378"/>
    </location>
</feature>
<feature type="transmembrane region" description="Helical" evidence="1">
    <location>
        <begin position="379"/>
        <end position="399"/>
    </location>
</feature>
<feature type="topological domain" description="Extracellular" evidence="1">
    <location>
        <begin position="400"/>
        <end position="410"/>
    </location>
</feature>
<feature type="transmembrane region" description="Helical" evidence="1">
    <location>
        <begin position="411"/>
        <end position="431"/>
    </location>
</feature>
<feature type="topological domain" description="Cytoplasmic" evidence="1">
    <location>
        <begin position="432"/>
        <end position="619"/>
    </location>
</feature>
<feature type="region of interest" description="Disordered" evidence="2">
    <location>
        <begin position="33"/>
        <end position="54"/>
    </location>
</feature>
<feature type="region of interest" description="Disordered" evidence="2">
    <location>
        <begin position="485"/>
        <end position="506"/>
    </location>
</feature>
<feature type="region of interest" description="Disordered" evidence="2">
    <location>
        <begin position="520"/>
        <end position="586"/>
    </location>
</feature>
<feature type="compositionally biased region" description="Basic and acidic residues" evidence="2">
    <location>
        <begin position="44"/>
        <end position="54"/>
    </location>
</feature>
<feature type="compositionally biased region" description="Polar residues" evidence="2">
    <location>
        <begin position="485"/>
        <end position="504"/>
    </location>
</feature>
<feature type="compositionally biased region" description="Polar residues" evidence="2">
    <location>
        <begin position="526"/>
        <end position="549"/>
    </location>
</feature>
<feature type="compositionally biased region" description="Basic residues" evidence="2">
    <location>
        <begin position="552"/>
        <end position="561"/>
    </location>
</feature>